<name>ARGO_PECCP</name>
<sequence>MFAVFLQGALLGAAMILPLGPQNAFVMNQGIRRQYHLMVALLCALSDMVLITAGIFGGSALLSQSSLLLGAVTWGGVAFLLWFGWGAMKTAFSKNIVLASAEVMKQSRWRIIATMLAVTWLNPHVYLDTFVVLGSLGSQFAGDARSWFALGTMTASFTWFFALALLASWLAPWLNTPRVQRVINFFVGVVMWGIALQLARHGWQ</sequence>
<feature type="chain" id="PRO_1000216166" description="Arginine exporter protein ArgO">
    <location>
        <begin position="1"/>
        <end position="204"/>
    </location>
</feature>
<feature type="transmembrane region" description="Helical" evidence="1">
    <location>
        <begin position="1"/>
        <end position="21"/>
    </location>
</feature>
<feature type="transmembrane region" description="Helical" evidence="1">
    <location>
        <begin position="37"/>
        <end position="57"/>
    </location>
</feature>
<feature type="transmembrane region" description="Helical" evidence="1">
    <location>
        <begin position="67"/>
        <end position="87"/>
    </location>
</feature>
<feature type="transmembrane region" description="Helical" evidence="1">
    <location>
        <begin position="111"/>
        <end position="131"/>
    </location>
</feature>
<feature type="transmembrane region" description="Helical" evidence="1">
    <location>
        <begin position="147"/>
        <end position="167"/>
    </location>
</feature>
<feature type="transmembrane region" description="Helical" evidence="1">
    <location>
        <begin position="179"/>
        <end position="199"/>
    </location>
</feature>
<organism>
    <name type="scientific">Pectobacterium carotovorum subsp. carotovorum (strain PC1)</name>
    <dbReference type="NCBI Taxonomy" id="561230"/>
    <lineage>
        <taxon>Bacteria</taxon>
        <taxon>Pseudomonadati</taxon>
        <taxon>Pseudomonadota</taxon>
        <taxon>Gammaproteobacteria</taxon>
        <taxon>Enterobacterales</taxon>
        <taxon>Pectobacteriaceae</taxon>
        <taxon>Pectobacterium</taxon>
    </lineage>
</organism>
<evidence type="ECO:0000255" key="1">
    <source>
        <dbReference type="HAMAP-Rule" id="MF_01901"/>
    </source>
</evidence>
<keyword id="KW-0029">Amino-acid transport</keyword>
<keyword id="KW-0997">Cell inner membrane</keyword>
<keyword id="KW-1003">Cell membrane</keyword>
<keyword id="KW-0472">Membrane</keyword>
<keyword id="KW-0812">Transmembrane</keyword>
<keyword id="KW-1133">Transmembrane helix</keyword>
<keyword id="KW-0813">Transport</keyword>
<protein>
    <recommendedName>
        <fullName evidence="1">Arginine exporter protein ArgO</fullName>
    </recommendedName>
</protein>
<reference key="1">
    <citation type="submission" date="2009-07" db="EMBL/GenBank/DDBJ databases">
        <title>Complete sequence of Pectobacterium carotovorum subsp. carotovorum PC1.</title>
        <authorList>
            <consortium name="US DOE Joint Genome Institute"/>
            <person name="Lucas S."/>
            <person name="Copeland A."/>
            <person name="Lapidus A."/>
            <person name="Glavina del Rio T."/>
            <person name="Tice H."/>
            <person name="Bruce D."/>
            <person name="Goodwin L."/>
            <person name="Pitluck S."/>
            <person name="Munk A.C."/>
            <person name="Brettin T."/>
            <person name="Detter J.C."/>
            <person name="Han C."/>
            <person name="Tapia R."/>
            <person name="Larimer F."/>
            <person name="Land M."/>
            <person name="Hauser L."/>
            <person name="Kyrpides N."/>
            <person name="Mikhailova N."/>
            <person name="Balakrishnan V."/>
            <person name="Glasner J."/>
            <person name="Perna N.T."/>
        </authorList>
    </citation>
    <scope>NUCLEOTIDE SEQUENCE [LARGE SCALE GENOMIC DNA]</scope>
    <source>
        <strain>PC1</strain>
    </source>
</reference>
<proteinExistence type="inferred from homology"/>
<comment type="function">
    <text evidence="1">Involved in the export of arginine. Important to control the intracellular level of arginine and the correct balance between arginine and lysine.</text>
</comment>
<comment type="catalytic activity">
    <reaction evidence="1">
        <text>L-arginine(in) = L-arginine(out)</text>
        <dbReference type="Rhea" id="RHEA:32143"/>
        <dbReference type="ChEBI" id="CHEBI:32682"/>
    </reaction>
    <physiologicalReaction direction="left-to-right" evidence="1">
        <dbReference type="Rhea" id="RHEA:32144"/>
    </physiologicalReaction>
</comment>
<comment type="subcellular location">
    <subcellularLocation>
        <location evidence="1">Cell inner membrane</location>
        <topology evidence="1">Multi-pass membrane protein</topology>
    </subcellularLocation>
</comment>
<comment type="similarity">
    <text evidence="1">Belongs to the LysE/ArgO transporter (TC 2.A.75) family.</text>
</comment>
<dbReference type="EMBL" id="CP001657">
    <property type="protein sequence ID" value="ACT14701.1"/>
    <property type="molecule type" value="Genomic_DNA"/>
</dbReference>
<dbReference type="RefSeq" id="WP_015841815.1">
    <property type="nucleotide sequence ID" value="NC_012917.1"/>
</dbReference>
<dbReference type="STRING" id="561230.PC1_3686"/>
<dbReference type="KEGG" id="pct:PC1_3686"/>
<dbReference type="eggNOG" id="COG1279">
    <property type="taxonomic scope" value="Bacteria"/>
</dbReference>
<dbReference type="HOGENOM" id="CLU_087840_0_1_6"/>
<dbReference type="OrthoDB" id="5638726at2"/>
<dbReference type="Proteomes" id="UP000002736">
    <property type="component" value="Chromosome"/>
</dbReference>
<dbReference type="GO" id="GO:0005886">
    <property type="term" value="C:plasma membrane"/>
    <property type="evidence" value="ECO:0007669"/>
    <property type="project" value="UniProtKB-SubCell"/>
</dbReference>
<dbReference type="GO" id="GO:0061459">
    <property type="term" value="F:L-arginine transmembrane transporter activity"/>
    <property type="evidence" value="ECO:0007669"/>
    <property type="project" value="UniProtKB-UniRule"/>
</dbReference>
<dbReference type="HAMAP" id="MF_01901">
    <property type="entry name" value="ArgO"/>
    <property type="match status" value="1"/>
</dbReference>
<dbReference type="InterPro" id="IPR023445">
    <property type="entry name" value="Arg_export_ArgO_enterobac"/>
</dbReference>
<dbReference type="InterPro" id="IPR001123">
    <property type="entry name" value="LeuE-type"/>
</dbReference>
<dbReference type="InterPro" id="IPR004777">
    <property type="entry name" value="Lys/arg_exporter"/>
</dbReference>
<dbReference type="NCBIfam" id="TIGR00948">
    <property type="entry name" value="2a75"/>
    <property type="match status" value="1"/>
</dbReference>
<dbReference type="NCBIfam" id="NF006801">
    <property type="entry name" value="PRK09304.1"/>
    <property type="match status" value="1"/>
</dbReference>
<dbReference type="PANTHER" id="PTHR30086">
    <property type="entry name" value="ARGININE EXPORTER PROTEIN ARGO"/>
    <property type="match status" value="1"/>
</dbReference>
<dbReference type="PANTHER" id="PTHR30086:SF20">
    <property type="entry name" value="ARGININE EXPORTER PROTEIN ARGO-RELATED"/>
    <property type="match status" value="1"/>
</dbReference>
<dbReference type="Pfam" id="PF01810">
    <property type="entry name" value="LysE"/>
    <property type="match status" value="1"/>
</dbReference>
<accession>C6DFG2</accession>
<gene>
    <name evidence="1" type="primary">argO</name>
    <name type="ordered locus">PC1_3686</name>
</gene>